<protein>
    <recommendedName>
        <fullName>DNA-binding protein HU-beta</fullName>
    </recommendedName>
</protein>
<reference key="1">
    <citation type="journal article" date="1995" name="Gene">
        <title>Cloning and sequence analyses of the genes coding for the integration host factor (IHF) and HU proteins of Pseudomonas aeruginosa.</title>
        <authorList>
            <person name="Delic-Attree I."/>
            <person name="Toussaint B."/>
            <person name="Vignais P.M."/>
        </authorList>
    </citation>
    <scope>NUCLEOTIDE SEQUENCE [GENOMIC DNA]</scope>
</reference>
<reference key="2">
    <citation type="journal article" date="2000" name="Nature">
        <title>Complete genome sequence of Pseudomonas aeruginosa PAO1, an opportunistic pathogen.</title>
        <authorList>
            <person name="Stover C.K."/>
            <person name="Pham X.-Q.T."/>
            <person name="Erwin A.L."/>
            <person name="Mizoguchi S.D."/>
            <person name="Warrener P."/>
            <person name="Hickey M.J."/>
            <person name="Brinkman F.S.L."/>
            <person name="Hufnagle W.O."/>
            <person name="Kowalik D.J."/>
            <person name="Lagrou M."/>
            <person name="Garber R.L."/>
            <person name="Goltry L."/>
            <person name="Tolentino E."/>
            <person name="Westbrock-Wadman S."/>
            <person name="Yuan Y."/>
            <person name="Brody L.L."/>
            <person name="Coulter S.N."/>
            <person name="Folger K.R."/>
            <person name="Kas A."/>
            <person name="Larbig K."/>
            <person name="Lim R.M."/>
            <person name="Smith K.A."/>
            <person name="Spencer D.H."/>
            <person name="Wong G.K.-S."/>
            <person name="Wu Z."/>
            <person name="Paulsen I.T."/>
            <person name="Reizer J."/>
            <person name="Saier M.H. Jr."/>
            <person name="Hancock R.E.W."/>
            <person name="Lory S."/>
            <person name="Olson M.V."/>
        </authorList>
    </citation>
    <scope>NUCLEOTIDE SEQUENCE [LARGE SCALE GENOMIC DNA]</scope>
    <source>
        <strain>ATCC 15692 / DSM 22644 / CIP 104116 / JCM 14847 / LMG 12228 / 1C / PRS 101 / PAO1</strain>
    </source>
</reference>
<reference key="3">
    <citation type="journal article" date="1981" name="FEBS Lett.">
        <title>A single DNA-binding protein from Pseudomonas aeruginosa homologous to proteins NS1 and NS2 (HU proteins) of Escherichia coli and other bacteria.</title>
        <authorList>
            <person name="Hawkins A.R."/>
            <person name="Wootton J.C."/>
        </authorList>
    </citation>
    <scope>PARTIAL PROTEIN SEQUENCE</scope>
    <source>
        <strain>PAO1607</strain>
    </source>
</reference>
<evidence type="ECO:0000250" key="1"/>
<evidence type="ECO:0000305" key="2"/>
<proteinExistence type="evidence at protein level"/>
<dbReference type="EMBL" id="L35257">
    <property type="protein sequence ID" value="AAA65948.1"/>
    <property type="molecule type" value="Genomic_DNA"/>
</dbReference>
<dbReference type="EMBL" id="AE004091">
    <property type="protein sequence ID" value="AAG05193.1"/>
    <property type="molecule type" value="Genomic_DNA"/>
</dbReference>
<dbReference type="PIR" id="H83420">
    <property type="entry name" value="H83420"/>
</dbReference>
<dbReference type="PIR" id="JC4061">
    <property type="entry name" value="JC4061"/>
</dbReference>
<dbReference type="RefSeq" id="NP_250495.1">
    <property type="nucleotide sequence ID" value="NC_002516.2"/>
</dbReference>
<dbReference type="RefSeq" id="WP_003087931.1">
    <property type="nucleotide sequence ID" value="NZ_QZGE01000003.1"/>
</dbReference>
<dbReference type="SMR" id="P05384"/>
<dbReference type="FunCoup" id="P05384">
    <property type="interactions" value="474"/>
</dbReference>
<dbReference type="STRING" id="208964.PA1804"/>
<dbReference type="PaxDb" id="208964-PA1804"/>
<dbReference type="GeneID" id="79913250"/>
<dbReference type="GeneID" id="878308"/>
<dbReference type="KEGG" id="pae:PA1804"/>
<dbReference type="PATRIC" id="fig|208964.12.peg.1874"/>
<dbReference type="PseudoCAP" id="PA1804"/>
<dbReference type="HOGENOM" id="CLU_105066_3_2_6"/>
<dbReference type="InParanoid" id="P05384"/>
<dbReference type="OrthoDB" id="9799835at2"/>
<dbReference type="PhylomeDB" id="P05384"/>
<dbReference type="BioCyc" id="PAER208964:G1FZ6-1841-MONOMER"/>
<dbReference type="Proteomes" id="UP000002438">
    <property type="component" value="Chromosome"/>
</dbReference>
<dbReference type="GO" id="GO:0005829">
    <property type="term" value="C:cytosol"/>
    <property type="evidence" value="ECO:0000318"/>
    <property type="project" value="GO_Central"/>
</dbReference>
<dbReference type="GO" id="GO:0003677">
    <property type="term" value="F:DNA binding"/>
    <property type="evidence" value="ECO:0000318"/>
    <property type="project" value="GO_Central"/>
</dbReference>
<dbReference type="GO" id="GO:0030527">
    <property type="term" value="F:structural constituent of chromatin"/>
    <property type="evidence" value="ECO:0007669"/>
    <property type="project" value="InterPro"/>
</dbReference>
<dbReference type="GO" id="GO:0030261">
    <property type="term" value="P:chromosome condensation"/>
    <property type="evidence" value="ECO:0007669"/>
    <property type="project" value="UniProtKB-KW"/>
</dbReference>
<dbReference type="CDD" id="cd13831">
    <property type="entry name" value="HU"/>
    <property type="match status" value="1"/>
</dbReference>
<dbReference type="FunFam" id="4.10.520.10:FF:000001">
    <property type="entry name" value="DNA-binding protein HU"/>
    <property type="match status" value="1"/>
</dbReference>
<dbReference type="Gene3D" id="4.10.520.10">
    <property type="entry name" value="IHF-like DNA-binding proteins"/>
    <property type="match status" value="1"/>
</dbReference>
<dbReference type="InterPro" id="IPR000119">
    <property type="entry name" value="Hist_DNA-bd"/>
</dbReference>
<dbReference type="InterPro" id="IPR020816">
    <property type="entry name" value="Histone-like_DNA-bd_CS"/>
</dbReference>
<dbReference type="InterPro" id="IPR010992">
    <property type="entry name" value="IHF-like_DNA-bd_dom_sf"/>
</dbReference>
<dbReference type="NCBIfam" id="NF007945">
    <property type="entry name" value="PRK10664.1"/>
    <property type="match status" value="1"/>
</dbReference>
<dbReference type="PANTHER" id="PTHR33175">
    <property type="entry name" value="DNA-BINDING PROTEIN HU"/>
    <property type="match status" value="1"/>
</dbReference>
<dbReference type="PANTHER" id="PTHR33175:SF3">
    <property type="entry name" value="DNA-BINDING PROTEIN HU-BETA"/>
    <property type="match status" value="1"/>
</dbReference>
<dbReference type="Pfam" id="PF00216">
    <property type="entry name" value="Bac_DNA_binding"/>
    <property type="match status" value="1"/>
</dbReference>
<dbReference type="PRINTS" id="PR01727">
    <property type="entry name" value="DNABINDINGHU"/>
</dbReference>
<dbReference type="SMART" id="SM00411">
    <property type="entry name" value="BHL"/>
    <property type="match status" value="1"/>
</dbReference>
<dbReference type="SUPFAM" id="SSF47729">
    <property type="entry name" value="IHF-like DNA-binding proteins"/>
    <property type="match status" value="1"/>
</dbReference>
<dbReference type="PROSITE" id="PS00045">
    <property type="entry name" value="HISTONE_LIKE"/>
    <property type="match status" value="1"/>
</dbReference>
<accession>P05384</accession>
<accession>Q51471</accession>
<comment type="function">
    <text>Histone-like DNA-binding protein which is capable of wrapping DNA to stabilize it, and thus to prevent its denaturation under extreme environmental conditions.</text>
</comment>
<comment type="subunit">
    <text evidence="1">Heterodimer of an alpha and a beta chain.</text>
</comment>
<comment type="similarity">
    <text evidence="2">Belongs to the bacterial histone-like protein family.</text>
</comment>
<name>DBHB_PSEAE</name>
<organism>
    <name type="scientific">Pseudomonas aeruginosa (strain ATCC 15692 / DSM 22644 / CIP 104116 / JCM 14847 / LMG 12228 / 1C / PRS 101 / PAO1)</name>
    <dbReference type="NCBI Taxonomy" id="208964"/>
    <lineage>
        <taxon>Bacteria</taxon>
        <taxon>Pseudomonadati</taxon>
        <taxon>Pseudomonadota</taxon>
        <taxon>Gammaproteobacteria</taxon>
        <taxon>Pseudomonadales</taxon>
        <taxon>Pseudomonadaceae</taxon>
        <taxon>Pseudomonas</taxon>
    </lineage>
</organism>
<gene>
    <name type="primary">hupB</name>
    <name type="ordered locus">PA1804</name>
</gene>
<feature type="chain" id="PRO_0000104956" description="DNA-binding protein HU-beta">
    <location>
        <begin position="1"/>
        <end position="90"/>
    </location>
</feature>
<feature type="sequence conflict" description="In Ref. 3; AA sequence." evidence="2" ref="3">
    <original>E</original>
    <variation>Q</variation>
    <location>
        <position position="5"/>
    </location>
</feature>
<feature type="sequence conflict" description="In Ref. 1; AAA65948." evidence="2" ref="1">
    <original>A</original>
    <variation>D</variation>
    <location>
        <position position="19"/>
    </location>
</feature>
<feature type="sequence conflict" description="In Ref. 3; AA sequence." evidence="2" ref="3">
    <original>R</original>
    <variation>K</variation>
    <location>
        <position position="23"/>
    </location>
</feature>
<feature type="sequence conflict" description="In Ref. 1; AAA65948." evidence="2" ref="1">
    <original>R</original>
    <variation>P</variation>
    <location>
        <position position="55"/>
    </location>
</feature>
<feature type="sequence conflict" description="In Ref. 1; AAA65948." evidence="2" ref="1">
    <location>
        <position position="74"/>
    </location>
</feature>
<sequence>MNKSELIDAIAASADIPKAVAGRALDAVIESVTGALKAGDSVVLVGFGTFAVKERAARTGRNPQTGKPIKIAAAKIPGFKAGKALKDAVN</sequence>
<keyword id="KW-0903">Direct protein sequencing</keyword>
<keyword id="KW-0226">DNA condensation</keyword>
<keyword id="KW-0238">DNA-binding</keyword>
<keyword id="KW-1185">Reference proteome</keyword>